<protein>
    <recommendedName>
        <fullName evidence="1">Probable nicotinate-nucleotide adenylyltransferase</fullName>
        <ecNumber evidence="1">2.7.7.18</ecNumber>
    </recommendedName>
    <alternativeName>
        <fullName evidence="1">Deamido-NAD(+) diphosphorylase</fullName>
    </alternativeName>
    <alternativeName>
        <fullName evidence="1">Deamido-NAD(+) pyrophosphorylase</fullName>
    </alternativeName>
    <alternativeName>
        <fullName evidence="1">Nicotinate mononucleotide adenylyltransferase</fullName>
        <shortName evidence="1">NaMN adenylyltransferase</shortName>
    </alternativeName>
</protein>
<comment type="function">
    <text evidence="1">Catalyzes the reversible adenylation of nicotinate mononucleotide (NaMN) to nicotinic acid adenine dinucleotide (NaAD).</text>
</comment>
<comment type="catalytic activity">
    <reaction evidence="1">
        <text>nicotinate beta-D-ribonucleotide + ATP + H(+) = deamido-NAD(+) + diphosphate</text>
        <dbReference type="Rhea" id="RHEA:22860"/>
        <dbReference type="ChEBI" id="CHEBI:15378"/>
        <dbReference type="ChEBI" id="CHEBI:30616"/>
        <dbReference type="ChEBI" id="CHEBI:33019"/>
        <dbReference type="ChEBI" id="CHEBI:57502"/>
        <dbReference type="ChEBI" id="CHEBI:58437"/>
        <dbReference type="EC" id="2.7.7.18"/>
    </reaction>
</comment>
<comment type="pathway">
    <text evidence="1">Cofactor biosynthesis; NAD(+) biosynthesis; deamido-NAD(+) from nicotinate D-ribonucleotide: step 1/1.</text>
</comment>
<comment type="similarity">
    <text evidence="1">Belongs to the NadD family.</text>
</comment>
<proteinExistence type="inferred from homology"/>
<dbReference type="EC" id="2.7.7.18" evidence="1"/>
<dbReference type="EMBL" id="CP000736">
    <property type="protein sequence ID" value="ABR52534.1"/>
    <property type="molecule type" value="Genomic_DNA"/>
</dbReference>
<dbReference type="SMR" id="A6U266"/>
<dbReference type="KEGG" id="sah:SaurJH1_1686"/>
<dbReference type="HOGENOM" id="CLU_069765_3_1_9"/>
<dbReference type="UniPathway" id="UPA00253">
    <property type="reaction ID" value="UER00332"/>
</dbReference>
<dbReference type="GO" id="GO:0005524">
    <property type="term" value="F:ATP binding"/>
    <property type="evidence" value="ECO:0007669"/>
    <property type="project" value="UniProtKB-KW"/>
</dbReference>
<dbReference type="GO" id="GO:0004515">
    <property type="term" value="F:nicotinate-nucleotide adenylyltransferase activity"/>
    <property type="evidence" value="ECO:0007669"/>
    <property type="project" value="UniProtKB-UniRule"/>
</dbReference>
<dbReference type="GO" id="GO:0009435">
    <property type="term" value="P:NAD biosynthetic process"/>
    <property type="evidence" value="ECO:0007669"/>
    <property type="project" value="UniProtKB-UniRule"/>
</dbReference>
<dbReference type="CDD" id="cd02165">
    <property type="entry name" value="NMNAT"/>
    <property type="match status" value="1"/>
</dbReference>
<dbReference type="FunFam" id="3.40.50.620:FF:000189">
    <property type="entry name" value="Probable nicotinate-nucleotide adenylyltransferase"/>
    <property type="match status" value="1"/>
</dbReference>
<dbReference type="Gene3D" id="3.40.50.620">
    <property type="entry name" value="HUPs"/>
    <property type="match status" value="1"/>
</dbReference>
<dbReference type="HAMAP" id="MF_00244">
    <property type="entry name" value="NaMN_adenylyltr"/>
    <property type="match status" value="1"/>
</dbReference>
<dbReference type="InterPro" id="IPR004821">
    <property type="entry name" value="Cyt_trans-like"/>
</dbReference>
<dbReference type="InterPro" id="IPR005248">
    <property type="entry name" value="NadD/NMNAT"/>
</dbReference>
<dbReference type="InterPro" id="IPR014729">
    <property type="entry name" value="Rossmann-like_a/b/a_fold"/>
</dbReference>
<dbReference type="NCBIfam" id="TIGR00482">
    <property type="entry name" value="nicotinate (nicotinamide) nucleotide adenylyltransferase"/>
    <property type="match status" value="1"/>
</dbReference>
<dbReference type="NCBIfam" id="NF000840">
    <property type="entry name" value="PRK00071.1-3"/>
    <property type="match status" value="1"/>
</dbReference>
<dbReference type="NCBIfam" id="NF000841">
    <property type="entry name" value="PRK00071.1-4"/>
    <property type="match status" value="1"/>
</dbReference>
<dbReference type="PANTHER" id="PTHR39321">
    <property type="entry name" value="NICOTINATE-NUCLEOTIDE ADENYLYLTRANSFERASE-RELATED"/>
    <property type="match status" value="1"/>
</dbReference>
<dbReference type="PANTHER" id="PTHR39321:SF3">
    <property type="entry name" value="PHOSPHOPANTETHEINE ADENYLYLTRANSFERASE"/>
    <property type="match status" value="1"/>
</dbReference>
<dbReference type="Pfam" id="PF01467">
    <property type="entry name" value="CTP_transf_like"/>
    <property type="match status" value="1"/>
</dbReference>
<dbReference type="SUPFAM" id="SSF52374">
    <property type="entry name" value="Nucleotidylyl transferase"/>
    <property type="match status" value="1"/>
</dbReference>
<accession>A6U266</accession>
<name>NADD_STAA2</name>
<evidence type="ECO:0000255" key="1">
    <source>
        <dbReference type="HAMAP-Rule" id="MF_00244"/>
    </source>
</evidence>
<gene>
    <name evidence="1" type="primary">nadD</name>
    <name type="ordered locus">SaurJH1_1686</name>
</gene>
<organism>
    <name type="scientific">Staphylococcus aureus (strain JH1)</name>
    <dbReference type="NCBI Taxonomy" id="359787"/>
    <lineage>
        <taxon>Bacteria</taxon>
        <taxon>Bacillati</taxon>
        <taxon>Bacillota</taxon>
        <taxon>Bacilli</taxon>
        <taxon>Bacillales</taxon>
        <taxon>Staphylococcaceae</taxon>
        <taxon>Staphylococcus</taxon>
    </lineage>
</organism>
<feature type="chain" id="PRO_1000078393" description="Probable nicotinate-nucleotide adenylyltransferase">
    <location>
        <begin position="1"/>
        <end position="189"/>
    </location>
</feature>
<sequence length="189" mass="22103">MKKIVLYGGQFNPIHTAHMIVASEVFHELQPDEFYFLPSFMSPLKKHNNFIDVQHRLTMIQMIIDELGFGDICDDEIKRGGQSYTYDTIKAFKEQHKDSELYFVIGTDQYNQLEKWYQIEYLKEMVTFVVVNRDKNSQNVENAMIAIQIPRVDISSTMIRQRVSEGKSIQVLVPKSVENYIKGEGLYEH</sequence>
<reference key="1">
    <citation type="submission" date="2007-06" db="EMBL/GenBank/DDBJ databases">
        <title>Complete sequence of chromosome of Staphylococcus aureus subsp. aureus JH1.</title>
        <authorList>
            <consortium name="US DOE Joint Genome Institute"/>
            <person name="Copeland A."/>
            <person name="Lucas S."/>
            <person name="Lapidus A."/>
            <person name="Barry K."/>
            <person name="Detter J.C."/>
            <person name="Glavina del Rio T."/>
            <person name="Hammon N."/>
            <person name="Israni S."/>
            <person name="Dalin E."/>
            <person name="Tice H."/>
            <person name="Pitluck S."/>
            <person name="Chain P."/>
            <person name="Malfatti S."/>
            <person name="Shin M."/>
            <person name="Vergez L."/>
            <person name="Schmutz J."/>
            <person name="Larimer F."/>
            <person name="Land M."/>
            <person name="Hauser L."/>
            <person name="Kyrpides N."/>
            <person name="Ivanova N."/>
            <person name="Tomasz A."/>
            <person name="Richardson P."/>
        </authorList>
    </citation>
    <scope>NUCLEOTIDE SEQUENCE [LARGE SCALE GENOMIC DNA]</scope>
    <source>
        <strain>JH1</strain>
    </source>
</reference>
<keyword id="KW-0067">ATP-binding</keyword>
<keyword id="KW-0520">NAD</keyword>
<keyword id="KW-0547">Nucleotide-binding</keyword>
<keyword id="KW-0548">Nucleotidyltransferase</keyword>
<keyword id="KW-0662">Pyridine nucleotide biosynthesis</keyword>
<keyword id="KW-0808">Transferase</keyword>